<dbReference type="EMBL" id="EU926026">
    <property type="protein sequence ID" value="ACI41358.1"/>
    <property type="molecule type" value="mRNA"/>
</dbReference>
<dbReference type="EMBL" id="FM864030">
    <property type="protein sequence ID" value="CAS03627.1"/>
    <property type="molecule type" value="mRNA"/>
</dbReference>
<dbReference type="SMR" id="B6DCU2"/>
<dbReference type="ArachnoServer" id="AS001741">
    <property type="toxin name" value="U3-lycotoxin-Ls1z"/>
</dbReference>
<dbReference type="GO" id="GO:0005576">
    <property type="term" value="C:extracellular region"/>
    <property type="evidence" value="ECO:0007669"/>
    <property type="project" value="UniProtKB-SubCell"/>
</dbReference>
<dbReference type="GO" id="GO:0090729">
    <property type="term" value="F:toxin activity"/>
    <property type="evidence" value="ECO:0007669"/>
    <property type="project" value="UniProtKB-KW"/>
</dbReference>
<dbReference type="InterPro" id="IPR019553">
    <property type="entry name" value="Spider_toxin_CSTX_knottin"/>
</dbReference>
<dbReference type="InterPro" id="IPR011142">
    <property type="entry name" value="Spider_toxin_CSTX_Knottin_CS"/>
</dbReference>
<dbReference type="Pfam" id="PF10530">
    <property type="entry name" value="Toxin_35"/>
    <property type="match status" value="1"/>
</dbReference>
<dbReference type="PROSITE" id="PS60029">
    <property type="entry name" value="SPIDER_CSTX"/>
    <property type="match status" value="1"/>
</dbReference>
<name>TXZ03_LYCSI</name>
<protein>
    <recommendedName>
        <fullName>Toxin-like structure LSTX-D3</fullName>
    </recommendedName>
</protein>
<proteinExistence type="evidence at transcript level"/>
<organism>
    <name type="scientific">Lycosa singoriensis</name>
    <name type="common">Wolf spider</name>
    <name type="synonym">Aranea singoriensis</name>
    <dbReference type="NCBI Taxonomy" id="434756"/>
    <lineage>
        <taxon>Eukaryota</taxon>
        <taxon>Metazoa</taxon>
        <taxon>Ecdysozoa</taxon>
        <taxon>Arthropoda</taxon>
        <taxon>Chelicerata</taxon>
        <taxon>Arachnida</taxon>
        <taxon>Araneae</taxon>
        <taxon>Araneomorphae</taxon>
        <taxon>Entelegynae</taxon>
        <taxon>Lycosoidea</taxon>
        <taxon>Lycosidae</taxon>
        <taxon>Lycosa</taxon>
    </lineage>
</organism>
<sequence>MMKVLVVVALLVTLISYSSSEGIDDLEADELLSLMANEQTRAKACTPRYYDCSHDRHSCCRSSMFKDVCTCFYPEGGDNKEVCTCQQPKHLKYMEKATDKIKNLFG</sequence>
<feature type="signal peptide" evidence="2">
    <location>
        <begin position="1"/>
        <end position="20"/>
    </location>
</feature>
<feature type="propeptide" id="PRO_0000401697" evidence="1">
    <location>
        <begin position="21"/>
        <end position="41"/>
    </location>
</feature>
<feature type="chain" id="PRO_0000401698" description="Toxin-like structure LSTX-D3">
    <location>
        <begin position="42"/>
        <end position="106"/>
    </location>
</feature>
<feature type="disulfide bond" evidence="1">
    <location>
        <begin position="45"/>
        <end position="60"/>
    </location>
</feature>
<feature type="disulfide bond" evidence="1">
    <location>
        <begin position="52"/>
        <end position="69"/>
    </location>
</feature>
<feature type="disulfide bond" evidence="1">
    <location>
        <begin position="59"/>
        <end position="85"/>
    </location>
</feature>
<feature type="disulfide bond" evidence="1">
    <location>
        <begin position="71"/>
        <end position="83"/>
    </location>
</feature>
<comment type="subcellular location">
    <subcellularLocation>
        <location evidence="1">Secreted</location>
    </subcellularLocation>
</comment>
<comment type="tissue specificity">
    <text>Expressed by the venom gland.</text>
</comment>
<comment type="domain">
    <text evidence="1">The presence of a 'disulfide through disulfide knot' structurally defines this protein as a knottin.</text>
</comment>
<comment type="similarity">
    <text evidence="3">Belongs to the neurotoxin 19 (CSTX) family. 02 (D7) subfamily.</text>
</comment>
<keyword id="KW-1015">Disulfide bond</keyword>
<keyword id="KW-0960">Knottin</keyword>
<keyword id="KW-0964">Secreted</keyword>
<keyword id="KW-0732">Signal</keyword>
<keyword id="KW-0800">Toxin</keyword>
<evidence type="ECO:0000250" key="1"/>
<evidence type="ECO:0000255" key="2"/>
<evidence type="ECO:0000305" key="3"/>
<reference key="1">
    <citation type="journal article" date="2010" name="Zoology">
        <title>Transcriptome analysis of the venom glands of the Chinese wolf spider Lycosa singoriensis.</title>
        <authorList>
            <person name="Zhang Y."/>
            <person name="Chen J."/>
            <person name="Tang X."/>
            <person name="Wang F."/>
            <person name="Jiang L."/>
            <person name="Xiong X."/>
            <person name="Wang M."/>
            <person name="Rong M."/>
            <person name="Liu Z."/>
            <person name="Liang S."/>
        </authorList>
    </citation>
    <scope>NUCLEOTIDE SEQUENCE [LARGE SCALE MRNA]</scope>
    <source>
        <tissue>Venom gland</tissue>
    </source>
</reference>
<accession>B6DCU2</accession>